<proteinExistence type="evidence at protein level"/>
<comment type="function">
    <text evidence="10">The alpha-2/delta subunit of voltage-dependent calcium channels regulates calcium current density and activation/inactivation kinetics of the calcium channel. Acts as a regulatory subunit for P/Q-type calcium channel (CACNA1A), N-type (CACNA1B), L-type (CACNA1C OR CACNA1D) and possibly T-type (CACNA1G).</text>
</comment>
<comment type="subunit">
    <text evidence="22">Dimer formed of alpha-2-2 and delta-2 chains; disulfide-linked. Voltage-dependent calcium channels are multisubunit complexes, consisting of alpha-1 (CACNA1), alpha-2 (CACNA2D), beta (CACNB) and delta (CACNA2D) subunits in a 1:1:1:1 ratio (Probable).</text>
</comment>
<comment type="subcellular location">
    <subcellularLocation>
        <location evidence="21">Membrane</location>
        <topology evidence="21">Single-pass type I membrane protein</topology>
    </subcellularLocation>
    <text evidence="8 12">Colocalizes with CACNA1A in lipid raft fractions.</text>
</comment>
<comment type="alternative products">
    <event type="alternative splicing"/>
    <isoform>
        <id>Q6PHS9-1</id>
        <name>1</name>
        <name>Alpha2delta-2a</name>
        <sequence type="displayed"/>
    </isoform>
    <isoform>
        <id>Q6PHS9-2</id>
        <name>2</name>
        <sequence type="described" ref="VSP_028061 VSP_028062"/>
    </isoform>
    <isoform>
        <id>Q6PHS9-3</id>
        <name>3</name>
        <name>Alpha2delta-2c</name>
        <sequence type="described" ref="VSP_028063"/>
    </isoform>
    <isoform>
        <id>Q6PHS9-4</id>
        <name>4</name>
        <name>Alpha2delta-2b</name>
        <sequence type="described" ref="VSP_028061"/>
    </isoform>
    <isoform>
        <id>Q6PHS9-5</id>
        <name>5</name>
        <sequence type="described" ref="VSP_028061 VSP_028062 VSP_028063"/>
    </isoform>
    <isoform>
        <id>Q6PHS9-6</id>
        <name>6</name>
        <sequence type="described" ref="VSP_028062 VSP_028063"/>
    </isoform>
</comment>
<comment type="tissue specificity">
    <text evidence="5">Predominantly expressed in brain in a restricted pattern. Also expressed at lower level in kidney and testis Not expressed in lung at any moment of development. In brain, it localizes to sections of P21 brain. Expressed at high level in the cerebellum, with moderate levels in medulla, pons, and striatum. Also expressed in cortex, hippocampus, habenula and nucleus reticularis thalami (nRT). Strongly expressed in cerebellar Purkinje cells.</text>
</comment>
<comment type="domain">
    <text>The MIDAS-like motif in the VWFA domain binds divalent metal cations and is required to promote trafficking of the alpha-1 (CACNA1) subunit to the plasma membrane by an integrin-like switch.</text>
</comment>
<comment type="PTM">
    <text evidence="6 13">N-glycosylated.</text>
</comment>
<comment type="PTM">
    <text evidence="6">May be proteolytically processed into subunits alpha-2-2 and delta-2 that are disulfide-linked. It is however unclear whether such cleavage really takes place in vivo and has a functional role. According to PubMed:11306709, it is processed, at least in vitro, while according to PubMed:17052222, it is only poorly processed in vivo.</text>
</comment>
<comment type="disease">
    <text evidence="7 8 9 14">Defects in Cacna2d2 are the cause of ducky phenotype (du). Du mice have spike-wave seizures characteristic of absence epilepsy and ataxia, with accompanying decreased calcium channel current in cerebellar Purkinje cells.</text>
</comment>
<comment type="disruption phenotype">
    <text evidence="10">Mice exhibit growth retardation, reduced life span, ataxic gait with apoptosis of cerebellar granule cells followed by Purkinje cell depletion, enhanced susceptibility to seizures, and cardiac abnormalities.</text>
</comment>
<comment type="miscellaneous">
    <text>Binds gabapentin, an antiepileptic drug.</text>
</comment>
<comment type="similarity">
    <text evidence="21">Belongs to the calcium channel subunit alpha-2/delta family.</text>
</comment>
<comment type="sequence caution" evidence="21">
    <conflict type="frameshift">
        <sequence resource="EMBL-CDS" id="AAL01651"/>
    </conflict>
</comment>
<feature type="signal peptide" evidence="2">
    <location>
        <begin position="1"/>
        <end position="18"/>
    </location>
</feature>
<feature type="chain" id="PRO_0000304640" description="Voltage-dependent calcium channel subunit alpha-2/delta-2">
    <location>
        <begin position="19"/>
        <end position="1154"/>
    </location>
</feature>
<feature type="chain" id="PRO_0000304641" description="Voltage-dependent calcium channel subunit alpha-2-2" evidence="2">
    <location>
        <begin position="19"/>
        <end position="1004"/>
    </location>
</feature>
<feature type="chain" id="PRO_0000304642" description="Voltage-dependent calcium channel subunit delta-2" evidence="2">
    <location>
        <begin position="1005"/>
        <end position="1154"/>
    </location>
</feature>
<feature type="topological domain" description="Extracellular" evidence="2">
    <location>
        <begin position="19"/>
        <end position="1116"/>
    </location>
</feature>
<feature type="transmembrane region" description="Helical" evidence="2">
    <location>
        <begin position="1117"/>
        <end position="1137"/>
    </location>
</feature>
<feature type="topological domain" description="Cytoplasmic" evidence="2">
    <location>
        <begin position="1138"/>
        <end position="1154"/>
    </location>
</feature>
<feature type="domain" description="VWFA" evidence="3">
    <location>
        <begin position="294"/>
        <end position="472"/>
    </location>
</feature>
<feature type="domain" description="Cache">
    <location>
        <begin position="488"/>
        <end position="577"/>
    </location>
</feature>
<feature type="region of interest" description="Disordered" evidence="4">
    <location>
        <begin position="1"/>
        <end position="37"/>
    </location>
</feature>
<feature type="short sequence motif" description="MIDAS-like motif">
    <location>
        <begin position="300"/>
        <end position="304"/>
    </location>
</feature>
<feature type="compositionally biased region" description="Pro residues" evidence="4">
    <location>
        <begin position="24"/>
        <end position="34"/>
    </location>
</feature>
<feature type="binding site" evidence="21">
    <location>
        <position position="300"/>
    </location>
    <ligand>
        <name>a divalent metal cation</name>
        <dbReference type="ChEBI" id="CHEBI:60240"/>
    </ligand>
</feature>
<feature type="binding site" evidence="21">
    <location>
        <position position="302"/>
    </location>
    <ligand>
        <name>a divalent metal cation</name>
        <dbReference type="ChEBI" id="CHEBI:60240"/>
    </ligand>
</feature>
<feature type="binding site" evidence="21">
    <location>
        <position position="304"/>
    </location>
    <ligand>
        <name>a divalent metal cation</name>
        <dbReference type="ChEBI" id="CHEBI:60240"/>
    </ligand>
</feature>
<feature type="glycosylation site" description="N-linked (GlcNAc...) asparagine" evidence="2">
    <location>
        <position position="205"/>
    </location>
</feature>
<feature type="glycosylation site" description="N-linked (GlcNAc...) asparagine" evidence="2">
    <location>
        <position position="389"/>
    </location>
</feature>
<feature type="glycosylation site" description="N-linked (GlcNAc...) asparagine" evidence="2">
    <location>
        <position position="421"/>
    </location>
</feature>
<feature type="glycosylation site" description="N-linked (GlcNAc...) asparagine" evidence="2">
    <location>
        <position position="510"/>
    </location>
</feature>
<feature type="glycosylation site" description="N-linked (GlcNAc...) asparagine" evidence="2">
    <location>
        <position position="543"/>
    </location>
</feature>
<feature type="glycosylation site" description="N-linked (GlcNAc...) asparagine" evidence="2">
    <location>
        <position position="627"/>
    </location>
</feature>
<feature type="glycosylation site" description="N-linked (GlcNAc...) asparagine" evidence="2">
    <location>
        <position position="864"/>
    </location>
</feature>
<feature type="disulfide bond" description="Interchain (between alpha-2-2 and delta-2 chains)" evidence="1">
    <location>
        <begin position="446"/>
        <end position="1101"/>
    </location>
</feature>
<feature type="splice variant" id="VSP_028061" description="In isoform 2, isoform 4 and isoform 5." evidence="17 18 19 20">
    <original>LPISKLKD</original>
    <variation>Y</variation>
    <location>
        <begin position="665"/>
        <end position="672"/>
    </location>
</feature>
<feature type="splice variant" id="VSP_028062" description="In isoform 2, isoform 5 and isoform 6." evidence="17 20">
    <original>K</original>
    <variation>KQ</variation>
    <location>
        <position position="873"/>
    </location>
</feature>
<feature type="splice variant" id="VSP_028063" description="In isoform 3, isoform 5 and isoform 6." evidence="15 16 17 20">
    <original>HS</original>
    <variation>HCPA</variation>
    <location>
        <begin position="1079"/>
        <end position="1080"/>
    </location>
</feature>
<feature type="sequence variant" description="In du; variant allele entla.">
    <original>E</original>
    <variation>EIYKDNRNLFEVQENEPQKLVEKVAGDIESLLDRKVQALK</variation>
    <location>
        <position position="99"/>
    </location>
</feature>
<feature type="mutagenesis site" description="Induces a strong decrease in gabapentin-binding." evidence="12">
    <original>R</original>
    <variation>A</variation>
    <location>
        <position position="282"/>
    </location>
</feature>
<feature type="mutagenesis site" description="Abolishes metal-binding and ability to regulate calcium current." evidence="11">
    <original>D</original>
    <variation>A</variation>
    <location>
        <position position="300"/>
    </location>
</feature>
<feature type="mutagenesis site" description="Abolishes metal-binding and ability to regulate calcium current." evidence="11">
    <original>S</original>
    <variation>A</variation>
    <location>
        <position position="302"/>
    </location>
</feature>
<feature type="mutagenesis site" description="Abolishes metal-binding and ability to regulate calcium current." evidence="11">
    <original>S</original>
    <variation>A</variation>
    <location>
        <position position="304"/>
    </location>
</feature>
<feature type="sequence conflict" description="In Ref. 1; AAG47846, 2; AAL01650 and 3; AAR89454." evidence="21" ref="1 2 3">
    <original>S</original>
    <variation>R</variation>
    <location>
        <position position="657"/>
    </location>
</feature>
<feature type="sequence conflict" description="In Ref. 1; AAG47846, 2; AAL01650 and 3; AAR89454." evidence="21" ref="1 2 3">
    <original>N</original>
    <variation>S</variation>
    <location>
        <position position="704"/>
    </location>
</feature>
<feature type="sequence conflict" description="In Ref. 1; AAG47846, 2; AAL01650 and 3; AAR89454." evidence="21" ref="1 2 3">
    <original>N</original>
    <variation>D</variation>
    <location>
        <position position="710"/>
    </location>
</feature>
<reference key="1">
    <citation type="journal article" date="2000" name="Mamm. Genome">
        <title>Genomic organization of the mouse and human alpha2delta2 voltage-dependent calcium channel subunit genes.</title>
        <authorList>
            <person name="Barclay J."/>
            <person name="Rees M."/>
        </authorList>
    </citation>
    <scope>NUCLEOTIDE SEQUENCE [MRNA] (ISOFORM 3)</scope>
    <source>
        <strain>TKDU</strain>
    </source>
</reference>
<reference key="2">
    <citation type="journal article" date="2001" name="J. Neurosci.">
        <title>Ducky mouse phenotype of epilepsy and ataxia is associated with mutations in the Cacna2d2 gene and decreased calcium channel current in cerebellar Purkinje cells.</title>
        <authorList>
            <person name="Barclay J."/>
            <person name="Balaguero N."/>
            <person name="Mione M."/>
            <person name="Ackerman S.L."/>
            <person name="Letts V.A."/>
            <person name="Brodbeck J."/>
            <person name="Canti C."/>
            <person name="Meir A."/>
            <person name="Page K.M."/>
            <person name="Kusumi K."/>
            <person name="Perez-Reyes E."/>
            <person name="Lander E.S."/>
            <person name="Frankel W.N."/>
            <person name="Gardiner R.M."/>
            <person name="Dolphin A.C."/>
            <person name="Rees M."/>
        </authorList>
    </citation>
    <scope>NUCLEOTIDE SEQUENCE [MRNA] (ISOFORM 3)</scope>
    <scope>INVOLVEMENT IN DU</scope>
    <source>
        <strain>TKDU</strain>
    </source>
</reference>
<reference key="3">
    <citation type="journal article" date="2004" name="J. Biol. Chem.">
        <title>entla, a novel epileptic and ataxic Cacna2d2 mutant of the mouse.</title>
        <authorList>
            <person name="Brill J."/>
            <person name="Klocke R."/>
            <person name="Paul D."/>
            <person name="Boison D."/>
            <person name="Gouder N."/>
            <person name="Klugbauer N."/>
            <person name="Hofmann F."/>
            <person name="Becker C.-M."/>
            <person name="Becker K."/>
        </authorList>
    </citation>
    <scope>NUCLEOTIDE SEQUENCE [MRNA] (ISOFORM 4)</scope>
    <scope>VARIANT ILE-TYR-LYS-ASP-ASN-ARG-ASN-LEU-PHE-GLU-VAL-GLN-GLU-ASN-GLU-PRO-GLN-LYS-LEU-VAL-GLU-LYS-VAL-ALA-GLY-ASP-ILE-GLU-SER-LEU-LEU-ASP-ARG-LYS-VAL-GLN-ALA-LEU-LYS-99 INS</scope>
    <source>
        <strain>DBA/2J</strain>
    </source>
</reference>
<reference key="4">
    <citation type="journal article" date="2005" name="Science">
        <title>The transcriptional landscape of the mammalian genome.</title>
        <authorList>
            <person name="Carninci P."/>
            <person name="Kasukawa T."/>
            <person name="Katayama S."/>
            <person name="Gough J."/>
            <person name="Frith M.C."/>
            <person name="Maeda N."/>
            <person name="Oyama R."/>
            <person name="Ravasi T."/>
            <person name="Lenhard B."/>
            <person name="Wells C."/>
            <person name="Kodzius R."/>
            <person name="Shimokawa K."/>
            <person name="Bajic V.B."/>
            <person name="Brenner S.E."/>
            <person name="Batalov S."/>
            <person name="Forrest A.R."/>
            <person name="Zavolan M."/>
            <person name="Davis M.J."/>
            <person name="Wilming L.G."/>
            <person name="Aidinis V."/>
            <person name="Allen J.E."/>
            <person name="Ambesi-Impiombato A."/>
            <person name="Apweiler R."/>
            <person name="Aturaliya R.N."/>
            <person name="Bailey T.L."/>
            <person name="Bansal M."/>
            <person name="Baxter L."/>
            <person name="Beisel K.W."/>
            <person name="Bersano T."/>
            <person name="Bono H."/>
            <person name="Chalk A.M."/>
            <person name="Chiu K.P."/>
            <person name="Choudhary V."/>
            <person name="Christoffels A."/>
            <person name="Clutterbuck D.R."/>
            <person name="Crowe M.L."/>
            <person name="Dalla E."/>
            <person name="Dalrymple B.P."/>
            <person name="de Bono B."/>
            <person name="Della Gatta G."/>
            <person name="di Bernardo D."/>
            <person name="Down T."/>
            <person name="Engstrom P."/>
            <person name="Fagiolini M."/>
            <person name="Faulkner G."/>
            <person name="Fletcher C.F."/>
            <person name="Fukushima T."/>
            <person name="Furuno M."/>
            <person name="Futaki S."/>
            <person name="Gariboldi M."/>
            <person name="Georgii-Hemming P."/>
            <person name="Gingeras T.R."/>
            <person name="Gojobori T."/>
            <person name="Green R.E."/>
            <person name="Gustincich S."/>
            <person name="Harbers M."/>
            <person name="Hayashi Y."/>
            <person name="Hensch T.K."/>
            <person name="Hirokawa N."/>
            <person name="Hill D."/>
            <person name="Huminiecki L."/>
            <person name="Iacono M."/>
            <person name="Ikeo K."/>
            <person name="Iwama A."/>
            <person name="Ishikawa T."/>
            <person name="Jakt M."/>
            <person name="Kanapin A."/>
            <person name="Katoh M."/>
            <person name="Kawasawa Y."/>
            <person name="Kelso J."/>
            <person name="Kitamura H."/>
            <person name="Kitano H."/>
            <person name="Kollias G."/>
            <person name="Krishnan S.P."/>
            <person name="Kruger A."/>
            <person name="Kummerfeld S.K."/>
            <person name="Kurochkin I.V."/>
            <person name="Lareau L.F."/>
            <person name="Lazarevic D."/>
            <person name="Lipovich L."/>
            <person name="Liu J."/>
            <person name="Liuni S."/>
            <person name="McWilliam S."/>
            <person name="Madan Babu M."/>
            <person name="Madera M."/>
            <person name="Marchionni L."/>
            <person name="Matsuda H."/>
            <person name="Matsuzawa S."/>
            <person name="Miki H."/>
            <person name="Mignone F."/>
            <person name="Miyake S."/>
            <person name="Morris K."/>
            <person name="Mottagui-Tabar S."/>
            <person name="Mulder N."/>
            <person name="Nakano N."/>
            <person name="Nakauchi H."/>
            <person name="Ng P."/>
            <person name="Nilsson R."/>
            <person name="Nishiguchi S."/>
            <person name="Nishikawa S."/>
            <person name="Nori F."/>
            <person name="Ohara O."/>
            <person name="Okazaki Y."/>
            <person name="Orlando V."/>
            <person name="Pang K.C."/>
            <person name="Pavan W.J."/>
            <person name="Pavesi G."/>
            <person name="Pesole G."/>
            <person name="Petrovsky N."/>
            <person name="Piazza S."/>
            <person name="Reed J."/>
            <person name="Reid J.F."/>
            <person name="Ring B.Z."/>
            <person name="Ringwald M."/>
            <person name="Rost B."/>
            <person name="Ruan Y."/>
            <person name="Salzberg S.L."/>
            <person name="Sandelin A."/>
            <person name="Schneider C."/>
            <person name="Schoenbach C."/>
            <person name="Sekiguchi K."/>
            <person name="Semple C.A."/>
            <person name="Seno S."/>
            <person name="Sessa L."/>
            <person name="Sheng Y."/>
            <person name="Shibata Y."/>
            <person name="Shimada H."/>
            <person name="Shimada K."/>
            <person name="Silva D."/>
            <person name="Sinclair B."/>
            <person name="Sperling S."/>
            <person name="Stupka E."/>
            <person name="Sugiura K."/>
            <person name="Sultana R."/>
            <person name="Takenaka Y."/>
            <person name="Taki K."/>
            <person name="Tammoja K."/>
            <person name="Tan S.L."/>
            <person name="Tang S."/>
            <person name="Taylor M.S."/>
            <person name="Tegner J."/>
            <person name="Teichmann S.A."/>
            <person name="Ueda H.R."/>
            <person name="van Nimwegen E."/>
            <person name="Verardo R."/>
            <person name="Wei C.L."/>
            <person name="Yagi K."/>
            <person name="Yamanishi H."/>
            <person name="Zabarovsky E."/>
            <person name="Zhu S."/>
            <person name="Zimmer A."/>
            <person name="Hide W."/>
            <person name="Bult C."/>
            <person name="Grimmond S.M."/>
            <person name="Teasdale R.D."/>
            <person name="Liu E.T."/>
            <person name="Brusic V."/>
            <person name="Quackenbush J."/>
            <person name="Wahlestedt C."/>
            <person name="Mattick J.S."/>
            <person name="Hume D.A."/>
            <person name="Kai C."/>
            <person name="Sasaki D."/>
            <person name="Tomaru Y."/>
            <person name="Fukuda S."/>
            <person name="Kanamori-Katayama M."/>
            <person name="Suzuki M."/>
            <person name="Aoki J."/>
            <person name="Arakawa T."/>
            <person name="Iida J."/>
            <person name="Imamura K."/>
            <person name="Itoh M."/>
            <person name="Kato T."/>
            <person name="Kawaji H."/>
            <person name="Kawagashira N."/>
            <person name="Kawashima T."/>
            <person name="Kojima M."/>
            <person name="Kondo S."/>
            <person name="Konno H."/>
            <person name="Nakano K."/>
            <person name="Ninomiya N."/>
            <person name="Nishio T."/>
            <person name="Okada M."/>
            <person name="Plessy C."/>
            <person name="Shibata K."/>
            <person name="Shiraki T."/>
            <person name="Suzuki S."/>
            <person name="Tagami M."/>
            <person name="Waki K."/>
            <person name="Watahiki A."/>
            <person name="Okamura-Oho Y."/>
            <person name="Suzuki H."/>
            <person name="Kawai J."/>
            <person name="Hayashizaki Y."/>
        </authorList>
    </citation>
    <scope>NUCLEOTIDE SEQUENCE [LARGE SCALE MRNA] (ISOFORM 2)</scope>
    <scope>NUCLEOTIDE SEQUENCE [LARGE SCALE MRNA] OF 788-1154 (ISOFORM 6)</scope>
    <source>
        <strain>C57BL/6J</strain>
        <tissue>Hippocampus</tissue>
        <tissue>Medulla oblongata</tissue>
        <tissue>Retina</tissue>
    </source>
</reference>
<reference key="5">
    <citation type="journal article" date="2004" name="Genome Res.">
        <title>The status, quality, and expansion of the NIH full-length cDNA project: the Mammalian Gene Collection (MGC).</title>
        <authorList>
            <consortium name="The MGC Project Team"/>
        </authorList>
    </citation>
    <scope>NUCLEOTIDE SEQUENCE [LARGE SCALE MRNA] (ISOFORMS 1 AND 4)</scope>
    <source>
        <strain>C57BL/6J</strain>
        <tissue>Brain</tissue>
    </source>
</reference>
<reference key="6">
    <citation type="journal article" date="2002" name="DNA Res.">
        <title>Prediction of the coding sequences of mouse homologues of KIAA gene: I. The complete nucleotide sequences of 100 mouse KIAA-homologous cDNAs identified by screening of terminal sequences of cDNA clones randomly sampled from size-fractionated libraries.</title>
        <authorList>
            <person name="Okazaki N."/>
            <person name="Kikuno R."/>
            <person name="Ohara R."/>
            <person name="Inamoto S."/>
            <person name="Hara Y."/>
            <person name="Nagase T."/>
            <person name="Ohara O."/>
            <person name="Koga H."/>
        </authorList>
    </citation>
    <scope>NUCLEOTIDE SEQUENCE [LARGE SCALE MRNA] OF 53-1154 (ISOFORM 5)</scope>
</reference>
<reference key="7">
    <citation type="journal article" date="2000" name="J. Biol. Chem.">
        <title>Functional properties of a new voltage-dependent calcium channel alpha(2)delta auxiliary subunit gene (CACNA2D2).</title>
        <authorList>
            <person name="Gao B."/>
            <person name="Sekido Y."/>
            <person name="Maximov A."/>
            <person name="Saad M."/>
            <person name="Forgacs E."/>
            <person name="Latif F."/>
            <person name="Wei M.-H."/>
            <person name="Lerman M."/>
            <person name="Lee J.-H."/>
            <person name="Perez-Reyes E."/>
            <person name="Bezprozvanny I."/>
            <person name="Minna J.D."/>
        </authorList>
    </citation>
    <scope>NUCLEOTIDE SEQUENCE [MRNA] OF 932-1154</scope>
</reference>
<reference key="8">
    <citation type="journal article" date="2000" name="Eur. J. Neurosci.">
        <title>Neuronal distribution and functional characterization of the calcium channel alpha2delta-2 subunit.</title>
        <authorList>
            <person name="Hobom M."/>
            <person name="Dai S."/>
            <person name="Marais E."/>
            <person name="Lacinova L."/>
            <person name="Hofmann F."/>
            <person name="Klugbauer N."/>
        </authorList>
    </citation>
    <scope>TISSUE SPECIFICITY</scope>
</reference>
<reference key="9">
    <citation type="journal article" date="2001" name="Mol. Pharmacol.">
        <title>Calcium channel alpha(2)delta subunits-structure and Gabapentin binding.</title>
        <authorList>
            <person name="Marais E."/>
            <person name="Klugbauer N."/>
            <person name="Hofmann F."/>
        </authorList>
    </citation>
    <scope>DISULFIDE BONDS</scope>
    <scope>GLYCOSYLATION</scope>
    <scope>PROTEOLYTIC PROCESSING</scope>
    <scope>GABAPENTIN-BINDING</scope>
</reference>
<reference key="10">
    <citation type="journal article" date="2002" name="J. Biol. Chem.">
        <title>The ducky mutation in Cacna2d2 results in altered Purkinje cell morphology and is associated with the expression of a truncated alpha 2 delta-2 protein with abnormal function.</title>
        <authorList>
            <person name="Brodbeck J."/>
            <person name="Davies A."/>
            <person name="Courtney J.-M."/>
            <person name="Meir A."/>
            <person name="Balaguero N."/>
            <person name="Canti C."/>
            <person name="Moss F.J."/>
            <person name="Page K.M."/>
            <person name="Pratt W.S."/>
            <person name="Hunt S.P."/>
            <person name="Barclay J."/>
            <person name="Rees M."/>
            <person name="Dolphin A.C."/>
        </authorList>
    </citation>
    <scope>SUBCELLULAR LOCATION</scope>
    <scope>INVOLVEMENT IN DU</scope>
</reference>
<reference key="11">
    <citation type="journal article" date="2004" name="Am. J. Pathol.">
        <title>Cerebellar ataxia, seizures, premature death, and cardiac abnormalities in mice with targeted disruption of the Cacna2d2 gene.</title>
        <authorList>
            <person name="Ivanov S.V."/>
            <person name="Ward J.M."/>
            <person name="Tessarollo L."/>
            <person name="McAreavey D."/>
            <person name="Sachdev V."/>
            <person name="Fananapazir L."/>
            <person name="Banks M.K."/>
            <person name="Morris N."/>
            <person name="Djurickovic D."/>
            <person name="Devor-Henneman D.E."/>
            <person name="Wei M.-H."/>
            <person name="Alvord G.W."/>
            <person name="Gao B."/>
            <person name="Richardson J.A."/>
            <person name="Minna J.D."/>
            <person name="Rogawski M.A."/>
            <person name="Lerman M.I."/>
        </authorList>
    </citation>
    <scope>FUNCTION</scope>
    <scope>DISRUPTION PHENOTYPE</scope>
</reference>
<reference key="12">
    <citation type="journal article" date="2005" name="Proc. Natl. Acad. Sci. U.S.A.">
        <title>The metal-ion-dependent adhesion site in the Von Willebrand factor-A domain of alpha2delta subunits is key to trafficking voltage-gated Ca2+ channels.</title>
        <authorList>
            <person name="Canti C."/>
            <person name="Nieto-Rostro M."/>
            <person name="Foucault I."/>
            <person name="Heblich F."/>
            <person name="Wratten J."/>
            <person name="Richards M.W."/>
            <person name="Hendrich J."/>
            <person name="Douglas L."/>
            <person name="Page K.M."/>
            <person name="Davies A."/>
            <person name="Dolphin A.C."/>
        </authorList>
    </citation>
    <scope>METAL-BINDING</scope>
    <scope>MIDAS-LIKE MOTIF</scope>
    <scope>MUTAGENESIS OF ASP-300; SER-302 AND SER-304</scope>
</reference>
<reference key="13">
    <citation type="journal article" date="2006" name="Biochem. Soc. Trans.">
        <title>Do voltage-gated calcium channel alpha2delta subunits require proteolytic processing into alpha2 and delta to be functional?</title>
        <authorList>
            <person name="Douglas L."/>
            <person name="Davies A."/>
            <person name="Wratten J."/>
            <person name="Dolphin A.C."/>
        </authorList>
    </citation>
    <scope>GLYCOSYLATION</scope>
    <scope>LACK OF PROTEOLYTIC PROCESSING</scope>
</reference>
<reference key="14">
    <citation type="journal article" date="2006" name="J. Neurosci.">
        <title>The calcium channel alpha2delta-2 subunit partitions with CaV2.1 into lipid rafts in cerebellum: implications for localization and function.</title>
        <authorList>
            <person name="Davies A."/>
            <person name="Douglas L."/>
            <person name="Hendrich J."/>
            <person name="Wratten J."/>
            <person name="Tran Van Minh A."/>
            <person name="Foucault I."/>
            <person name="Koch D."/>
            <person name="Pratt W.S."/>
            <person name="Saibil H.R."/>
            <person name="Dolphin A.C."/>
        </authorList>
    </citation>
    <scope>SUBCELLULAR LOCATION</scope>
    <scope>INTERACTION WITH STOML2</scope>
    <scope>GABAPENTIN-BINDING</scope>
    <scope>MUTAGENESIS OF ARG-282</scope>
</reference>
<reference key="15">
    <citation type="journal article" date="2006" name="J. Neurosci.">
        <title>The ducky(2J) mutation in Cacna2d2 results in reduced spontaneous Purkinje cell activity and altered gene expression.</title>
        <authorList>
            <person name="Donato R."/>
            <person name="Page K.M."/>
            <person name="Koch D."/>
            <person name="Nieto-Rostro M."/>
            <person name="Foucault I."/>
            <person name="Davies A."/>
            <person name="Wilkinson T."/>
            <person name="Rees M."/>
            <person name="Edwards F.A."/>
            <person name="Dolphin A.C."/>
        </authorList>
    </citation>
    <scope>INVOLVEMENT IN DU</scope>
</reference>
<reference key="16">
    <citation type="journal article" date="2010" name="Cell">
        <title>A tissue-specific atlas of mouse protein phosphorylation and expression.</title>
        <authorList>
            <person name="Huttlin E.L."/>
            <person name="Jedrychowski M.P."/>
            <person name="Elias J.E."/>
            <person name="Goswami T."/>
            <person name="Rad R."/>
            <person name="Beausoleil S.A."/>
            <person name="Villen J."/>
            <person name="Haas W."/>
            <person name="Sowa M.E."/>
            <person name="Gygi S.P."/>
        </authorList>
    </citation>
    <scope>IDENTIFICATION BY MASS SPECTROMETRY [LARGE SCALE ANALYSIS]</scope>
    <source>
        <tissue>Brain</tissue>
        <tissue>Heart</tissue>
    </source>
</reference>
<organism>
    <name type="scientific">Mus musculus</name>
    <name type="common">Mouse</name>
    <dbReference type="NCBI Taxonomy" id="10090"/>
    <lineage>
        <taxon>Eukaryota</taxon>
        <taxon>Metazoa</taxon>
        <taxon>Chordata</taxon>
        <taxon>Craniata</taxon>
        <taxon>Vertebrata</taxon>
        <taxon>Euteleostomi</taxon>
        <taxon>Mammalia</taxon>
        <taxon>Eutheria</taxon>
        <taxon>Euarchontoglires</taxon>
        <taxon>Glires</taxon>
        <taxon>Rodentia</taxon>
        <taxon>Myomorpha</taxon>
        <taxon>Muroidea</taxon>
        <taxon>Muridae</taxon>
        <taxon>Murinae</taxon>
        <taxon>Mus</taxon>
        <taxon>Mus</taxon>
    </lineage>
</organism>
<evidence type="ECO:0000250" key="1"/>
<evidence type="ECO:0000255" key="2"/>
<evidence type="ECO:0000255" key="3">
    <source>
        <dbReference type="PROSITE-ProRule" id="PRU00219"/>
    </source>
</evidence>
<evidence type="ECO:0000256" key="4">
    <source>
        <dbReference type="SAM" id="MobiDB-lite"/>
    </source>
</evidence>
<evidence type="ECO:0000269" key="5">
    <source>
    </source>
</evidence>
<evidence type="ECO:0000269" key="6">
    <source>
    </source>
</evidence>
<evidence type="ECO:0000269" key="7">
    <source>
    </source>
</evidence>
<evidence type="ECO:0000269" key="8">
    <source>
    </source>
</evidence>
<evidence type="ECO:0000269" key="9">
    <source>
    </source>
</evidence>
<evidence type="ECO:0000269" key="10">
    <source>
    </source>
</evidence>
<evidence type="ECO:0000269" key="11">
    <source>
    </source>
</evidence>
<evidence type="ECO:0000269" key="12">
    <source>
    </source>
</evidence>
<evidence type="ECO:0000269" key="13">
    <source>
    </source>
</evidence>
<evidence type="ECO:0000269" key="14">
    <source>
    </source>
</evidence>
<evidence type="ECO:0000303" key="15">
    <source>
    </source>
</evidence>
<evidence type="ECO:0000303" key="16">
    <source>
    </source>
</evidence>
<evidence type="ECO:0000303" key="17">
    <source>
    </source>
</evidence>
<evidence type="ECO:0000303" key="18">
    <source>
    </source>
</evidence>
<evidence type="ECO:0000303" key="19">
    <source>
    </source>
</evidence>
<evidence type="ECO:0000303" key="20">
    <source>
    </source>
</evidence>
<evidence type="ECO:0000305" key="21"/>
<evidence type="ECO:0000305" key="22">
    <source>
    </source>
</evidence>
<sequence length="1154" mass="130385">MAVPARTCGASWPGPVRTARPWPGRGPRPCPDPRGPASGPARPLLLLLPPLLLLPLLTAPGASAYSFPQQHTMQHWARRLEQEIDGVMRIFGGVQQLREIYKDNRNLFEVQENEPQKLVEKVAGDIESLLDRKVQALKRLADAAENFQKAHRWQDNIKEEDIMYYDAKADAELDDPESEDMERGSKTSALRLDFIEDPNFKNKVNYSYTAVQIPTDIYKGSTVILNELNWTEALENVFIENRRQDPTLLWQVFGSATGVTRYYPATPWRAPKKIDLYDVRRRPWYIQGASSPKDMVIIVDVSGSVSGLTLKLMKTSVCEMLDTLSDDDYVNVASFNEKAQPVSCFTHLVQANVRNKKVFKEAVQGMVAKGTTGYKAGFEYAFDQLQNSNITRANCNKMIMMFTDGGEDRVQDVFEKYNWPNRTVRVFTFSVGQHNYDVTPLQWMACTNKGYYFEIPSIGAIRINTQEYLDVLGRPMVLAGKDAKQVQWTNVYEDALGLGLVVTGTLPVFNLTQDGPGEKKNQLILGVMGIDVALNDIKRLTPNYTLGANGYVFAIDLNGYVLLHPNLKPQTTNFREPVTLDFLDAELEDENKEEIRRSMIDGDKGHKQIRTLVKSLDERYIDEVIRNYTWVPIRSTNYSLGLVLPPYSTYYLQANLSDQILQVKLPISKLKDFEFLLPSSFESEGHVFIAPREYCKDLNASDNNTEFLKNFIELMEKVTPDSKQCNNFLLHNLILDTGITQQLVERVWRDQDLNTYSLLAVFAATDGGITRVFPNKAAEDWTENPEPFNASFYRRSLDNHGYIFKPPHQDSLLRPLELENDTVGVLVSTAVELSLGRRTLRPAVVGVKLDLEAWAEKFKVLASNRTHQDQPQKCGPSSHCEMDCEVNNEDLLCVLIDDGGFLVLSNQNHQWDQVGRFFSEVDANLMLALYNNSFYTRKESYDYQAACAPQPPGNLGAAPRGVFVPTIADFLNLAWWTSAAAWSLFQQLLYGLIYHSWFQADPAEAEGSPETRESSCVMKQTQYYFGSVNASYNAIIDCGNCSRLFHAQRLTNTNLLFVVAEKPLCSQCEAGRLLQKETHSDGPEQCELVQRPRYRRGPHICFDYNATEDTSDCGRGASFPPSLGVLVSLQLLLLLGLPPRPQPQVHSFAASRHL</sequence>
<dbReference type="EMBL" id="AF247139">
    <property type="protein sequence ID" value="AAG47846.1"/>
    <property type="molecule type" value="mRNA"/>
</dbReference>
<dbReference type="EMBL" id="AF247141">
    <property type="protein sequence ID" value="AAL01650.1"/>
    <property type="molecule type" value="mRNA"/>
</dbReference>
<dbReference type="EMBL" id="AF247142">
    <property type="protein sequence ID" value="AAL01651.1"/>
    <property type="status" value="ALT_FRAME"/>
    <property type="molecule type" value="mRNA"/>
</dbReference>
<dbReference type="EMBL" id="AY502107">
    <property type="protein sequence ID" value="AAR89454.1"/>
    <property type="molecule type" value="mRNA"/>
</dbReference>
<dbReference type="EMBL" id="AK044603">
    <property type="protein sequence ID" value="BAC31998.1"/>
    <property type="molecule type" value="mRNA"/>
</dbReference>
<dbReference type="EMBL" id="AK164143">
    <property type="protein sequence ID" value="BAE37646.1"/>
    <property type="molecule type" value="mRNA"/>
</dbReference>
<dbReference type="EMBL" id="AK161839">
    <property type="protein sequence ID" value="BAE36599.1"/>
    <property type="molecule type" value="mRNA"/>
</dbReference>
<dbReference type="EMBL" id="BC056389">
    <property type="protein sequence ID" value="AAH56389.1"/>
    <property type="molecule type" value="mRNA"/>
</dbReference>
<dbReference type="EMBL" id="BC158058">
    <property type="protein sequence ID" value="AAI58059.1"/>
    <property type="molecule type" value="mRNA"/>
</dbReference>
<dbReference type="EMBL" id="AB093246">
    <property type="protein sequence ID" value="BAC41430.1"/>
    <property type="molecule type" value="mRNA"/>
</dbReference>
<dbReference type="EMBL" id="AF169633">
    <property type="protein sequence ID" value="AAD48037.1"/>
    <property type="molecule type" value="mRNA"/>
</dbReference>
<dbReference type="CCDS" id="CCDS52916.1">
    <molecule id="Q6PHS9-1"/>
</dbReference>
<dbReference type="CCDS" id="CCDS52917.1">
    <molecule id="Q6PHS9-2"/>
</dbReference>
<dbReference type="CCDS" id="CCDS72304.1">
    <molecule id="Q6PHS9-3"/>
</dbReference>
<dbReference type="CCDS" id="CCDS72305.1">
    <molecule id="Q6PHS9-5"/>
</dbReference>
<dbReference type="RefSeq" id="NP_001167518.1">
    <molecule id="Q6PHS9-3"/>
    <property type="nucleotide sequence ID" value="NM_001174047.2"/>
</dbReference>
<dbReference type="RefSeq" id="NP_001167519.1">
    <molecule id="Q6PHS9-5"/>
    <property type="nucleotide sequence ID" value="NM_001174048.2"/>
</dbReference>
<dbReference type="RefSeq" id="NP_001167520.1">
    <molecule id="Q6PHS9-4"/>
    <property type="nucleotide sequence ID" value="NM_001174049.2"/>
</dbReference>
<dbReference type="RefSeq" id="NP_001167521.1">
    <molecule id="Q6PHS9-2"/>
    <property type="nucleotide sequence ID" value="NM_001174050.2"/>
</dbReference>
<dbReference type="RefSeq" id="NP_064659.2">
    <molecule id="Q6PHS9-1"/>
    <property type="nucleotide sequence ID" value="NM_020263.4"/>
</dbReference>
<dbReference type="RefSeq" id="XP_011241201.1">
    <molecule id="Q6PHS9-6"/>
    <property type="nucleotide sequence ID" value="XM_011242899.4"/>
</dbReference>
<dbReference type="SMR" id="Q6PHS9"/>
<dbReference type="BioGRID" id="208183">
    <property type="interactions" value="3"/>
</dbReference>
<dbReference type="FunCoup" id="Q6PHS9">
    <property type="interactions" value="818"/>
</dbReference>
<dbReference type="IntAct" id="Q6PHS9">
    <property type="interactions" value="2"/>
</dbReference>
<dbReference type="MINT" id="Q6PHS9"/>
<dbReference type="STRING" id="10090.ENSMUSP00000132512"/>
<dbReference type="GlyConnect" id="2436">
    <molecule id="Q6PHS9-2"/>
    <property type="glycosylation" value="2 N-Linked glycans (1 site)"/>
</dbReference>
<dbReference type="GlyConnect" id="2821">
    <property type="glycosylation" value="10 N-Linked glycans (4 sites)"/>
</dbReference>
<dbReference type="GlyCosmos" id="Q6PHS9">
    <property type="glycosylation" value="9 sites, 10 glycans"/>
</dbReference>
<dbReference type="GlyGen" id="Q6PHS9">
    <property type="glycosylation" value="14 sites, 19 N-linked glycans (10 sites), 1 O-linked glycan (1 site)"/>
</dbReference>
<dbReference type="iPTMnet" id="Q6PHS9"/>
<dbReference type="PhosphoSitePlus" id="Q6PHS9"/>
<dbReference type="SwissPalm" id="Q6PHS9"/>
<dbReference type="PaxDb" id="10090-ENSMUSP00000132512"/>
<dbReference type="ProteomicsDB" id="281732">
    <molecule id="Q6PHS9-1"/>
</dbReference>
<dbReference type="ProteomicsDB" id="281733">
    <molecule id="Q6PHS9-2"/>
</dbReference>
<dbReference type="ProteomicsDB" id="281734">
    <molecule id="Q6PHS9-3"/>
</dbReference>
<dbReference type="ProteomicsDB" id="281735">
    <molecule id="Q6PHS9-4"/>
</dbReference>
<dbReference type="ProteomicsDB" id="281736">
    <molecule id="Q6PHS9-5"/>
</dbReference>
<dbReference type="ProteomicsDB" id="281737">
    <molecule id="Q6PHS9-6"/>
</dbReference>
<dbReference type="Antibodypedia" id="30959">
    <property type="antibodies" value="158 antibodies from 29 providers"/>
</dbReference>
<dbReference type="DNASU" id="56808"/>
<dbReference type="Ensembl" id="ENSMUST00000010210.13">
    <molecule id="Q6PHS9-2"/>
    <property type="protein sequence ID" value="ENSMUSP00000010210.7"/>
    <property type="gene ID" value="ENSMUSG00000010066.17"/>
</dbReference>
<dbReference type="Ensembl" id="ENSMUST00000085092.12">
    <molecule id="Q6PHS9-1"/>
    <property type="protein sequence ID" value="ENSMUSP00000082173.6"/>
    <property type="gene ID" value="ENSMUSG00000010066.17"/>
</dbReference>
<dbReference type="Ensembl" id="ENSMUST00000166799.8">
    <molecule id="Q6PHS9-6"/>
    <property type="protein sequence ID" value="ENSMUSP00000126029.2"/>
    <property type="gene ID" value="ENSMUSG00000010066.17"/>
</dbReference>
<dbReference type="Ensembl" id="ENSMUST00000168532.8">
    <molecule id="Q6PHS9-3"/>
    <property type="protein sequence ID" value="ENSMUSP00000132512.2"/>
    <property type="gene ID" value="ENSMUSG00000010066.17"/>
</dbReference>
<dbReference type="Ensembl" id="ENSMUST00000170737.3">
    <molecule id="Q6PHS9-5"/>
    <property type="protein sequence ID" value="ENSMUSP00000125943.2"/>
    <property type="gene ID" value="ENSMUSG00000010066.17"/>
</dbReference>
<dbReference type="GeneID" id="56808"/>
<dbReference type="KEGG" id="mmu:56808"/>
<dbReference type="UCSC" id="uc009rli.2">
    <molecule id="Q6PHS9-2"/>
    <property type="organism name" value="mouse"/>
</dbReference>
<dbReference type="UCSC" id="uc009rlj.2">
    <molecule id="Q6PHS9-4"/>
    <property type="organism name" value="mouse"/>
</dbReference>
<dbReference type="UCSC" id="uc012haf.1">
    <molecule id="Q6PHS9-1"/>
    <property type="organism name" value="mouse"/>
</dbReference>
<dbReference type="UCSC" id="uc057apw.1">
    <molecule id="Q6PHS9-3"/>
    <property type="organism name" value="mouse"/>
</dbReference>
<dbReference type="UCSC" id="uc057apx.1">
    <molecule id="Q6PHS9-5"/>
    <property type="organism name" value="mouse"/>
</dbReference>
<dbReference type="AGR" id="MGI:1929813"/>
<dbReference type="CTD" id="9254"/>
<dbReference type="MGI" id="MGI:1929813">
    <property type="gene designation" value="Cacna2d2"/>
</dbReference>
<dbReference type="VEuPathDB" id="HostDB:ENSMUSG00000010066"/>
<dbReference type="eggNOG" id="KOG2353">
    <property type="taxonomic scope" value="Eukaryota"/>
</dbReference>
<dbReference type="GeneTree" id="ENSGT00940000156238"/>
<dbReference type="HOGENOM" id="CLU_004660_0_0_1"/>
<dbReference type="InParanoid" id="Q6PHS9"/>
<dbReference type="OMA" id="PQITNFR"/>
<dbReference type="PhylomeDB" id="Q6PHS9"/>
<dbReference type="TreeFam" id="TF315824"/>
<dbReference type="Reactome" id="R-MMU-112308">
    <property type="pathway name" value="Presynaptic depolarization and calcium channel opening"/>
</dbReference>
<dbReference type="Reactome" id="R-MMU-422356">
    <property type="pathway name" value="Regulation of insulin secretion"/>
</dbReference>
<dbReference type="Reactome" id="R-MMU-5576892">
    <property type="pathway name" value="Phase 0 - rapid depolarisation"/>
</dbReference>
<dbReference type="Reactome" id="R-MMU-5576893">
    <property type="pathway name" value="Phase 2 - plateau phase"/>
</dbReference>
<dbReference type="BioGRID-ORCS" id="56808">
    <property type="hits" value="0 hits in 77 CRISPR screens"/>
</dbReference>
<dbReference type="CD-CODE" id="CE726F99">
    <property type="entry name" value="Postsynaptic density"/>
</dbReference>
<dbReference type="ChiTaRS" id="Cacna2d2">
    <property type="organism name" value="mouse"/>
</dbReference>
<dbReference type="PRO" id="PR:Q6PHS9"/>
<dbReference type="Proteomes" id="UP000000589">
    <property type="component" value="Chromosome 9"/>
</dbReference>
<dbReference type="RNAct" id="Q6PHS9">
    <property type="molecule type" value="protein"/>
</dbReference>
<dbReference type="Bgee" id="ENSMUSG00000010066">
    <property type="expression patterns" value="Expressed in lateral septal nucleus and 208 other cell types or tissues"/>
</dbReference>
<dbReference type="ExpressionAtlas" id="Q6PHS9">
    <property type="expression patterns" value="baseline and differential"/>
</dbReference>
<dbReference type="GO" id="GO:0098982">
    <property type="term" value="C:GABA-ergic synapse"/>
    <property type="evidence" value="ECO:0000314"/>
    <property type="project" value="SynGO"/>
</dbReference>
<dbReference type="GO" id="GO:0005886">
    <property type="term" value="C:plasma membrane"/>
    <property type="evidence" value="ECO:0000304"/>
    <property type="project" value="Reactome"/>
</dbReference>
<dbReference type="GO" id="GO:0048787">
    <property type="term" value="C:presynaptic active zone membrane"/>
    <property type="evidence" value="ECO:0000314"/>
    <property type="project" value="SynGO"/>
</dbReference>
<dbReference type="GO" id="GO:0005891">
    <property type="term" value="C:voltage-gated calcium channel complex"/>
    <property type="evidence" value="ECO:0000314"/>
    <property type="project" value="MGI"/>
</dbReference>
<dbReference type="GO" id="GO:0046872">
    <property type="term" value="F:metal ion binding"/>
    <property type="evidence" value="ECO:0007669"/>
    <property type="project" value="UniProtKB-KW"/>
</dbReference>
<dbReference type="GO" id="GO:0005245">
    <property type="term" value="F:voltage-gated calcium channel activity"/>
    <property type="evidence" value="ECO:0000314"/>
    <property type="project" value="MGI"/>
</dbReference>
<dbReference type="GO" id="GO:0006816">
    <property type="term" value="P:calcium ion transport"/>
    <property type="evidence" value="ECO:0000305"/>
    <property type="project" value="MGI"/>
</dbReference>
<dbReference type="GO" id="GO:0055001">
    <property type="term" value="P:muscle cell development"/>
    <property type="evidence" value="ECO:0000315"/>
    <property type="project" value="MGI"/>
</dbReference>
<dbReference type="GO" id="GO:0007528">
    <property type="term" value="P:neuromuscular junction development"/>
    <property type="evidence" value="ECO:0000315"/>
    <property type="project" value="MGI"/>
</dbReference>
<dbReference type="GO" id="GO:0035265">
    <property type="term" value="P:organ growth"/>
    <property type="evidence" value="ECO:0000315"/>
    <property type="project" value="MGI"/>
</dbReference>
<dbReference type="GO" id="GO:0046622">
    <property type="term" value="P:positive regulation of organ growth"/>
    <property type="evidence" value="ECO:0000315"/>
    <property type="project" value="MGI"/>
</dbReference>
<dbReference type="GO" id="GO:0040014">
    <property type="term" value="P:regulation of multicellular organism growth"/>
    <property type="evidence" value="ECO:0000315"/>
    <property type="project" value="MGI"/>
</dbReference>
<dbReference type="GO" id="GO:0098696">
    <property type="term" value="P:regulation of neurotransmitter receptor localization to postsynaptic specialization membrane"/>
    <property type="evidence" value="ECO:0000314"/>
    <property type="project" value="SynGO"/>
</dbReference>
<dbReference type="GO" id="GO:0060024">
    <property type="term" value="P:rhythmic synaptic transmission"/>
    <property type="evidence" value="ECO:0000315"/>
    <property type="project" value="MGI"/>
</dbReference>
<dbReference type="CDD" id="cd01463">
    <property type="entry name" value="vWA_VGCC_like"/>
    <property type="match status" value="1"/>
</dbReference>
<dbReference type="FunFam" id="3.30.450.20:FF:000014">
    <property type="entry name" value="voltage-dependent calcium channel subunit alpha-2/delta-1 isoform X1"/>
    <property type="match status" value="1"/>
</dbReference>
<dbReference type="FunFam" id="3.40.50.410:FF:000006">
    <property type="entry name" value="voltage-dependent calcium channel subunit alpha-2/delta-1 isoform X1"/>
    <property type="match status" value="1"/>
</dbReference>
<dbReference type="Gene3D" id="3.30.450.20">
    <property type="entry name" value="PAS domain"/>
    <property type="match status" value="1"/>
</dbReference>
<dbReference type="Gene3D" id="3.40.50.410">
    <property type="entry name" value="von Willebrand factor, type A domain"/>
    <property type="match status" value="1"/>
</dbReference>
<dbReference type="InterPro" id="IPR051173">
    <property type="entry name" value="Ca_channel_alpha-2/delta"/>
</dbReference>
<dbReference type="InterPro" id="IPR013680">
    <property type="entry name" value="VDCC_a2/dsu"/>
</dbReference>
<dbReference type="InterPro" id="IPR013608">
    <property type="entry name" value="VWA_N"/>
</dbReference>
<dbReference type="InterPro" id="IPR002035">
    <property type="entry name" value="VWF_A"/>
</dbReference>
<dbReference type="InterPro" id="IPR036465">
    <property type="entry name" value="vWFA_dom_sf"/>
</dbReference>
<dbReference type="PANTHER" id="PTHR10166">
    <property type="entry name" value="VOLTAGE-DEPENDENT CALCIUM CHANNEL SUBUNIT ALPHA-2/DELTA-RELATED"/>
    <property type="match status" value="1"/>
</dbReference>
<dbReference type="PANTHER" id="PTHR10166:SF7">
    <property type="entry name" value="VOLTAGE-DEPENDENT CALCIUM CHANNEL SUBUNIT ALPHA-2_DELTA-2"/>
    <property type="match status" value="1"/>
</dbReference>
<dbReference type="Pfam" id="PF08473">
    <property type="entry name" value="VGCC_alpha2"/>
    <property type="match status" value="1"/>
</dbReference>
<dbReference type="Pfam" id="PF00092">
    <property type="entry name" value="VWA"/>
    <property type="match status" value="1"/>
</dbReference>
<dbReference type="Pfam" id="PF08399">
    <property type="entry name" value="VWA_N"/>
    <property type="match status" value="1"/>
</dbReference>
<dbReference type="SMART" id="SM00327">
    <property type="entry name" value="VWA"/>
    <property type="match status" value="1"/>
</dbReference>
<dbReference type="SUPFAM" id="SSF53300">
    <property type="entry name" value="vWA-like"/>
    <property type="match status" value="1"/>
</dbReference>
<dbReference type="PROSITE" id="PS50234">
    <property type="entry name" value="VWFA"/>
    <property type="match status" value="1"/>
</dbReference>
<name>CA2D2_MOUSE</name>
<accession>Q6PHS9</accession>
<accession>B2RY16</accession>
<accession>Q3TPT9</accession>
<accession>Q3TSS6</accession>
<accession>Q6REE3</accession>
<accession>Q8C8R8</accession>
<accession>Q8CHE9</accession>
<accession>Q920H5</accession>
<accession>Q920H6</accession>
<accession>Q9EQG2</accession>
<accession>Q9R142</accession>
<protein>
    <recommendedName>
        <fullName>Voltage-dependent calcium channel subunit alpha-2/delta-2</fullName>
    </recommendedName>
    <alternativeName>
        <fullName>Protein ducky</fullName>
    </alternativeName>
    <alternativeName>
        <fullName>Voltage-gated calcium channel subunit alpha-2/delta-2</fullName>
    </alternativeName>
    <component>
        <recommendedName>
            <fullName>Voltage-dependent calcium channel subunit alpha-2-2</fullName>
        </recommendedName>
    </component>
    <component>
        <recommendedName>
            <fullName>Voltage-dependent calcium channel subunit delta-2</fullName>
        </recommendedName>
    </component>
</protein>
<keyword id="KW-0025">Alternative splicing</keyword>
<keyword id="KW-0106">Calcium</keyword>
<keyword id="KW-0107">Calcium channel</keyword>
<keyword id="KW-0109">Calcium transport</keyword>
<keyword id="KW-0225">Disease variant</keyword>
<keyword id="KW-1015">Disulfide bond</keyword>
<keyword id="KW-0325">Glycoprotein</keyword>
<keyword id="KW-0407">Ion channel</keyword>
<keyword id="KW-0406">Ion transport</keyword>
<keyword id="KW-0472">Membrane</keyword>
<keyword id="KW-0479">Metal-binding</keyword>
<keyword id="KW-1185">Reference proteome</keyword>
<keyword id="KW-0732">Signal</keyword>
<keyword id="KW-0812">Transmembrane</keyword>
<keyword id="KW-1133">Transmembrane helix</keyword>
<keyword id="KW-0813">Transport</keyword>
<keyword id="KW-0851">Voltage-gated channel</keyword>
<gene>
    <name type="primary">Cacna2d2</name>
    <name type="synonym">Kiaa0558</name>
</gene>